<evidence type="ECO:0000255" key="1">
    <source>
        <dbReference type="HAMAP-Rule" id="MF_00692"/>
    </source>
</evidence>
<organism>
    <name type="scientific">Xylella fastidiosa (strain Temecula1 / ATCC 700964)</name>
    <dbReference type="NCBI Taxonomy" id="183190"/>
    <lineage>
        <taxon>Bacteria</taxon>
        <taxon>Pseudomonadati</taxon>
        <taxon>Pseudomonadota</taxon>
        <taxon>Gammaproteobacteria</taxon>
        <taxon>Lysobacterales</taxon>
        <taxon>Lysobacteraceae</taxon>
        <taxon>Xylella</taxon>
    </lineage>
</organism>
<name>SELO_XYLFT</name>
<sequence>MWPLRFNNRFIDVLPCDPEVSLRSRQVLEAWSRVAPTPVPMPCLLAYSSEVAAILNFDAEELVTPRFVEVFSGNALYTGMQPYAVNYGGHQFGQWVGQLGDGRVITLGELLGADGVYYELQLKGAGPTPYSRGADGRAVLRSSIREFLCSEAMHHLGIPTTRALSLIATGDTVIRDMLYDGHPAPEPSAIVCRVAPSFIRFGTFELPASRGDIDLLRRLVEFTIIRDYPHLHGAGETLYADWFAEICTRTAELVAHWMRVGFVHGVMNTDNMSILGLTIDYGPYGWIDNNDLDWTPNVTDVQSRRYRFGAQPQVAYWNLGCLARALAPLFSDAASLQAGLERFRATYLAAERRDAAAKLGFAACFDEDLELFDALRTCMHQAEMDMTLTFLGLADWEPNMPDSLSLWAEAFYDPVKRDAQAPMLRDWLQRYAARLSVDPLPVAERHERMRLANPRYVLRNYLTQQAIECAEQGDLTELHALLEVMRRPYDFQLGREAYAMRRPEWARSRIGCSMLSCSS</sequence>
<dbReference type="EC" id="2.7.7.-" evidence="1"/>
<dbReference type="EC" id="2.7.7.108" evidence="1"/>
<dbReference type="EMBL" id="AE009442">
    <property type="protein sequence ID" value="AAO29821.1"/>
    <property type="molecule type" value="Genomic_DNA"/>
</dbReference>
<dbReference type="RefSeq" id="WP_011098324.1">
    <property type="nucleotide sequence ID" value="NC_004556.1"/>
</dbReference>
<dbReference type="SMR" id="Q87A39"/>
<dbReference type="KEGG" id="xft:PD_1992"/>
<dbReference type="HOGENOM" id="CLU_010245_4_0_6"/>
<dbReference type="Proteomes" id="UP000002516">
    <property type="component" value="Chromosome"/>
</dbReference>
<dbReference type="GO" id="GO:0070733">
    <property type="term" value="F:AMPylase activity"/>
    <property type="evidence" value="ECO:0007669"/>
    <property type="project" value="RHEA"/>
</dbReference>
<dbReference type="GO" id="GO:0005524">
    <property type="term" value="F:ATP binding"/>
    <property type="evidence" value="ECO:0007669"/>
    <property type="project" value="UniProtKB-UniRule"/>
</dbReference>
<dbReference type="GO" id="GO:0000287">
    <property type="term" value="F:magnesium ion binding"/>
    <property type="evidence" value="ECO:0007669"/>
    <property type="project" value="UniProtKB-UniRule"/>
</dbReference>
<dbReference type="HAMAP" id="MF_00692">
    <property type="entry name" value="YdiU_SelO"/>
    <property type="match status" value="1"/>
</dbReference>
<dbReference type="InterPro" id="IPR003846">
    <property type="entry name" value="SelO"/>
</dbReference>
<dbReference type="NCBIfam" id="NF000658">
    <property type="entry name" value="PRK00029.1"/>
    <property type="match status" value="1"/>
</dbReference>
<dbReference type="PANTHER" id="PTHR32057">
    <property type="entry name" value="PROTEIN ADENYLYLTRANSFERASE SELO, MITOCHONDRIAL"/>
    <property type="match status" value="1"/>
</dbReference>
<dbReference type="PANTHER" id="PTHR32057:SF14">
    <property type="entry name" value="PROTEIN ADENYLYLTRANSFERASE SELO, MITOCHONDRIAL"/>
    <property type="match status" value="1"/>
</dbReference>
<dbReference type="Pfam" id="PF02696">
    <property type="entry name" value="SelO"/>
    <property type="match status" value="1"/>
</dbReference>
<proteinExistence type="inferred from homology"/>
<feature type="chain" id="PRO_0000121441" description="Protein nucleotidyltransferase YdiU">
    <location>
        <begin position="1"/>
        <end position="519"/>
    </location>
</feature>
<feature type="active site" description="Proton acceptor" evidence="1">
    <location>
        <position position="270"/>
    </location>
</feature>
<feature type="binding site" evidence="1">
    <location>
        <position position="100"/>
    </location>
    <ligand>
        <name>ATP</name>
        <dbReference type="ChEBI" id="CHEBI:30616"/>
    </ligand>
</feature>
<feature type="binding site" evidence="1">
    <location>
        <position position="102"/>
    </location>
    <ligand>
        <name>ATP</name>
        <dbReference type="ChEBI" id="CHEBI:30616"/>
    </ligand>
</feature>
<feature type="binding site" evidence="1">
    <location>
        <position position="103"/>
    </location>
    <ligand>
        <name>ATP</name>
        <dbReference type="ChEBI" id="CHEBI:30616"/>
    </ligand>
</feature>
<feature type="binding site" evidence="1">
    <location>
        <position position="123"/>
    </location>
    <ligand>
        <name>ATP</name>
        <dbReference type="ChEBI" id="CHEBI:30616"/>
    </ligand>
</feature>
<feature type="binding site" evidence="1">
    <location>
        <position position="135"/>
    </location>
    <ligand>
        <name>ATP</name>
        <dbReference type="ChEBI" id="CHEBI:30616"/>
    </ligand>
</feature>
<feature type="binding site" evidence="1">
    <location>
        <position position="136"/>
    </location>
    <ligand>
        <name>ATP</name>
        <dbReference type="ChEBI" id="CHEBI:30616"/>
    </ligand>
</feature>
<feature type="binding site" evidence="1">
    <location>
        <position position="193"/>
    </location>
    <ligand>
        <name>ATP</name>
        <dbReference type="ChEBI" id="CHEBI:30616"/>
    </ligand>
</feature>
<feature type="binding site" evidence="1">
    <location>
        <position position="200"/>
    </location>
    <ligand>
        <name>ATP</name>
        <dbReference type="ChEBI" id="CHEBI:30616"/>
    </ligand>
</feature>
<feature type="binding site" evidence="1">
    <location>
        <position position="271"/>
    </location>
    <ligand>
        <name>Mg(2+)</name>
        <dbReference type="ChEBI" id="CHEBI:18420"/>
    </ligand>
</feature>
<feature type="binding site" evidence="1">
    <location>
        <position position="280"/>
    </location>
    <ligand>
        <name>ATP</name>
        <dbReference type="ChEBI" id="CHEBI:30616"/>
    </ligand>
</feature>
<feature type="binding site" evidence="1">
    <location>
        <position position="280"/>
    </location>
    <ligand>
        <name>Mg(2+)</name>
        <dbReference type="ChEBI" id="CHEBI:18420"/>
    </ligand>
</feature>
<protein>
    <recommendedName>
        <fullName evidence="1">Protein nucleotidyltransferase YdiU</fullName>
        <ecNumber evidence="1">2.7.7.-</ecNumber>
    </recommendedName>
    <alternativeName>
        <fullName evidence="1">Protein adenylyltransferase YdiU</fullName>
        <ecNumber evidence="1">2.7.7.108</ecNumber>
    </alternativeName>
    <alternativeName>
        <fullName evidence="1">Protein uridylyltransferase YdiU</fullName>
        <ecNumber evidence="1">2.7.7.-</ecNumber>
    </alternativeName>
</protein>
<keyword id="KW-0067">ATP-binding</keyword>
<keyword id="KW-0460">Magnesium</keyword>
<keyword id="KW-0464">Manganese</keyword>
<keyword id="KW-0479">Metal-binding</keyword>
<keyword id="KW-0547">Nucleotide-binding</keyword>
<keyword id="KW-0548">Nucleotidyltransferase</keyword>
<keyword id="KW-1185">Reference proteome</keyword>
<keyword id="KW-0808">Transferase</keyword>
<comment type="function">
    <text evidence="1">Nucleotidyltransferase involved in the post-translational modification of proteins. It can catalyze the addition of adenosine monophosphate (AMP) or uridine monophosphate (UMP) to a protein, resulting in modifications known as AMPylation and UMPylation.</text>
</comment>
<comment type="catalytic activity">
    <reaction evidence="1">
        <text>L-seryl-[protein] + ATP = 3-O-(5'-adenylyl)-L-seryl-[protein] + diphosphate</text>
        <dbReference type="Rhea" id="RHEA:58120"/>
        <dbReference type="Rhea" id="RHEA-COMP:9863"/>
        <dbReference type="Rhea" id="RHEA-COMP:15073"/>
        <dbReference type="ChEBI" id="CHEBI:29999"/>
        <dbReference type="ChEBI" id="CHEBI:30616"/>
        <dbReference type="ChEBI" id="CHEBI:33019"/>
        <dbReference type="ChEBI" id="CHEBI:142516"/>
        <dbReference type="EC" id="2.7.7.108"/>
    </reaction>
</comment>
<comment type="catalytic activity">
    <reaction evidence="1">
        <text>L-threonyl-[protein] + ATP = 3-O-(5'-adenylyl)-L-threonyl-[protein] + diphosphate</text>
        <dbReference type="Rhea" id="RHEA:54292"/>
        <dbReference type="Rhea" id="RHEA-COMP:11060"/>
        <dbReference type="Rhea" id="RHEA-COMP:13847"/>
        <dbReference type="ChEBI" id="CHEBI:30013"/>
        <dbReference type="ChEBI" id="CHEBI:30616"/>
        <dbReference type="ChEBI" id="CHEBI:33019"/>
        <dbReference type="ChEBI" id="CHEBI:138113"/>
        <dbReference type="EC" id="2.7.7.108"/>
    </reaction>
</comment>
<comment type="catalytic activity">
    <reaction evidence="1">
        <text>L-tyrosyl-[protein] + ATP = O-(5'-adenylyl)-L-tyrosyl-[protein] + diphosphate</text>
        <dbReference type="Rhea" id="RHEA:54288"/>
        <dbReference type="Rhea" id="RHEA-COMP:10136"/>
        <dbReference type="Rhea" id="RHEA-COMP:13846"/>
        <dbReference type="ChEBI" id="CHEBI:30616"/>
        <dbReference type="ChEBI" id="CHEBI:33019"/>
        <dbReference type="ChEBI" id="CHEBI:46858"/>
        <dbReference type="ChEBI" id="CHEBI:83624"/>
        <dbReference type="EC" id="2.7.7.108"/>
    </reaction>
</comment>
<comment type="catalytic activity">
    <reaction evidence="1">
        <text>L-histidyl-[protein] + UTP = N(tele)-(5'-uridylyl)-L-histidyl-[protein] + diphosphate</text>
        <dbReference type="Rhea" id="RHEA:83891"/>
        <dbReference type="Rhea" id="RHEA-COMP:9745"/>
        <dbReference type="Rhea" id="RHEA-COMP:20239"/>
        <dbReference type="ChEBI" id="CHEBI:29979"/>
        <dbReference type="ChEBI" id="CHEBI:33019"/>
        <dbReference type="ChEBI" id="CHEBI:46398"/>
        <dbReference type="ChEBI" id="CHEBI:233474"/>
    </reaction>
</comment>
<comment type="catalytic activity">
    <reaction evidence="1">
        <text>L-seryl-[protein] + UTP = O-(5'-uridylyl)-L-seryl-[protein] + diphosphate</text>
        <dbReference type="Rhea" id="RHEA:64604"/>
        <dbReference type="Rhea" id="RHEA-COMP:9863"/>
        <dbReference type="Rhea" id="RHEA-COMP:16635"/>
        <dbReference type="ChEBI" id="CHEBI:29999"/>
        <dbReference type="ChEBI" id="CHEBI:33019"/>
        <dbReference type="ChEBI" id="CHEBI:46398"/>
        <dbReference type="ChEBI" id="CHEBI:156051"/>
    </reaction>
</comment>
<comment type="catalytic activity">
    <reaction evidence="1">
        <text>L-tyrosyl-[protein] + UTP = O-(5'-uridylyl)-L-tyrosyl-[protein] + diphosphate</text>
        <dbReference type="Rhea" id="RHEA:83887"/>
        <dbReference type="Rhea" id="RHEA-COMP:10136"/>
        <dbReference type="Rhea" id="RHEA-COMP:20238"/>
        <dbReference type="ChEBI" id="CHEBI:33019"/>
        <dbReference type="ChEBI" id="CHEBI:46398"/>
        <dbReference type="ChEBI" id="CHEBI:46858"/>
        <dbReference type="ChEBI" id="CHEBI:90602"/>
    </reaction>
</comment>
<comment type="cofactor">
    <cofactor evidence="1">
        <name>Mg(2+)</name>
        <dbReference type="ChEBI" id="CHEBI:18420"/>
    </cofactor>
    <cofactor evidence="1">
        <name>Mn(2+)</name>
        <dbReference type="ChEBI" id="CHEBI:29035"/>
    </cofactor>
</comment>
<comment type="similarity">
    <text evidence="1">Belongs to the SELO family.</text>
</comment>
<accession>Q87A39</accession>
<gene>
    <name evidence="1" type="primary">ydiU</name>
    <name evidence="1" type="synonym">selO</name>
    <name type="ordered locus">PD_1992</name>
</gene>
<reference key="1">
    <citation type="journal article" date="2003" name="J. Bacteriol.">
        <title>Comparative analyses of the complete genome sequences of Pierce's disease and citrus variegated chlorosis strains of Xylella fastidiosa.</title>
        <authorList>
            <person name="Van Sluys M.A."/>
            <person name="de Oliveira M.C."/>
            <person name="Monteiro-Vitorello C.B."/>
            <person name="Miyaki C.Y."/>
            <person name="Furlan L.R."/>
            <person name="Camargo L.E.A."/>
            <person name="da Silva A.C.R."/>
            <person name="Moon D.H."/>
            <person name="Takita M.A."/>
            <person name="Lemos E.G.M."/>
            <person name="Machado M.A."/>
            <person name="Ferro M.I.T."/>
            <person name="da Silva F.R."/>
            <person name="Goldman M.H.S."/>
            <person name="Goldman G.H."/>
            <person name="Lemos M.V.F."/>
            <person name="El-Dorry H."/>
            <person name="Tsai S.M."/>
            <person name="Carrer H."/>
            <person name="Carraro D.M."/>
            <person name="de Oliveira R.C."/>
            <person name="Nunes L.R."/>
            <person name="Siqueira W.J."/>
            <person name="Coutinho L.L."/>
            <person name="Kimura E.T."/>
            <person name="Ferro E.S."/>
            <person name="Harakava R."/>
            <person name="Kuramae E.E."/>
            <person name="Marino C.L."/>
            <person name="Giglioti E."/>
            <person name="Abreu I.L."/>
            <person name="Alves L.M.C."/>
            <person name="do Amaral A.M."/>
            <person name="Baia G.S."/>
            <person name="Blanco S.R."/>
            <person name="Brito M.S."/>
            <person name="Cannavan F.S."/>
            <person name="Celestino A.V."/>
            <person name="da Cunha A.F."/>
            <person name="Fenille R.C."/>
            <person name="Ferro J.A."/>
            <person name="Formighieri E.F."/>
            <person name="Kishi L.T."/>
            <person name="Leoni S.G."/>
            <person name="Oliveira A.R."/>
            <person name="Rosa V.E. Jr."/>
            <person name="Sassaki F.T."/>
            <person name="Sena J.A.D."/>
            <person name="de Souza A.A."/>
            <person name="Truffi D."/>
            <person name="Tsukumo F."/>
            <person name="Yanai G.M."/>
            <person name="Zaros L.G."/>
            <person name="Civerolo E.L."/>
            <person name="Simpson A.J.G."/>
            <person name="Almeida N.F. Jr."/>
            <person name="Setubal J.C."/>
            <person name="Kitajima J.P."/>
        </authorList>
    </citation>
    <scope>NUCLEOTIDE SEQUENCE [LARGE SCALE GENOMIC DNA]</scope>
    <source>
        <strain>Temecula1 / ATCC 700964</strain>
    </source>
</reference>